<accession>Q06GW8</accession>
<organism>
    <name type="scientific">Drimys granadensis</name>
    <dbReference type="NCBI Taxonomy" id="224735"/>
    <lineage>
        <taxon>Eukaryota</taxon>
        <taxon>Viridiplantae</taxon>
        <taxon>Streptophyta</taxon>
        <taxon>Embryophyta</taxon>
        <taxon>Tracheophyta</taxon>
        <taxon>Spermatophyta</taxon>
        <taxon>Magnoliopsida</taxon>
        <taxon>Magnoliidae</taxon>
        <taxon>Canellales</taxon>
        <taxon>Winteraceae</taxon>
        <taxon>Drimys</taxon>
    </lineage>
</organism>
<reference key="1">
    <citation type="journal article" date="2006" name="BMC Evol. Biol.">
        <title>Complete plastid genome sequences of Drimys, Liriodendron, and Piper: implications for the phylogenetic relationships of magnoliids.</title>
        <authorList>
            <person name="Cai Z."/>
            <person name="Penaflor C."/>
            <person name="Kuehl J.V."/>
            <person name="Leebens-Mack J."/>
            <person name="Carlson J.E."/>
            <person name="dePamphilis C.W."/>
            <person name="Boore J.L."/>
            <person name="Jansen R.K."/>
        </authorList>
    </citation>
    <scope>NUCLEOTIDE SEQUENCE [LARGE SCALE GENOMIC DNA]</scope>
</reference>
<sequence>MATQTVEGSSRSRPRRTTTGNLLKPLNSEYGKVAPGWGTTPLMGVAMALFAIFLSIILEIYNSSVLLDGISMS</sequence>
<proteinExistence type="inferred from homology"/>
<dbReference type="EMBL" id="DQ887676">
    <property type="protein sequence ID" value="ABH88325.1"/>
    <property type="molecule type" value="Genomic_DNA"/>
</dbReference>
<dbReference type="RefSeq" id="YP_784415.1">
    <property type="nucleotide sequence ID" value="NC_008456.1"/>
</dbReference>
<dbReference type="SMR" id="Q06GW8"/>
<dbReference type="GeneID" id="4363601"/>
<dbReference type="GO" id="GO:0009535">
    <property type="term" value="C:chloroplast thylakoid membrane"/>
    <property type="evidence" value="ECO:0007669"/>
    <property type="project" value="UniProtKB-SubCell"/>
</dbReference>
<dbReference type="GO" id="GO:0009523">
    <property type="term" value="C:photosystem II"/>
    <property type="evidence" value="ECO:0007669"/>
    <property type="project" value="UniProtKB-KW"/>
</dbReference>
<dbReference type="GO" id="GO:0042301">
    <property type="term" value="F:phosphate ion binding"/>
    <property type="evidence" value="ECO:0007669"/>
    <property type="project" value="InterPro"/>
</dbReference>
<dbReference type="GO" id="GO:0015979">
    <property type="term" value="P:photosynthesis"/>
    <property type="evidence" value="ECO:0007669"/>
    <property type="project" value="UniProtKB-UniRule"/>
</dbReference>
<dbReference type="GO" id="GO:0050821">
    <property type="term" value="P:protein stabilization"/>
    <property type="evidence" value="ECO:0007669"/>
    <property type="project" value="InterPro"/>
</dbReference>
<dbReference type="FunFam" id="1.20.5.880:FF:000001">
    <property type="entry name" value="Photosystem II reaction center protein H"/>
    <property type="match status" value="1"/>
</dbReference>
<dbReference type="Gene3D" id="1.20.5.880">
    <property type="entry name" value="Photosystem II reaction center protein H"/>
    <property type="match status" value="1"/>
</dbReference>
<dbReference type="HAMAP" id="MF_00752">
    <property type="entry name" value="PSII_PsbH"/>
    <property type="match status" value="1"/>
</dbReference>
<dbReference type="InterPro" id="IPR001056">
    <property type="entry name" value="PSII_PsbH"/>
</dbReference>
<dbReference type="InterPro" id="IPR036863">
    <property type="entry name" value="PSII_PsbH_sf"/>
</dbReference>
<dbReference type="NCBIfam" id="NF002728">
    <property type="entry name" value="PRK02624.1"/>
    <property type="match status" value="1"/>
</dbReference>
<dbReference type="PANTHER" id="PTHR34469">
    <property type="entry name" value="PHOTOSYSTEM II REACTION CENTER PROTEIN H"/>
    <property type="match status" value="1"/>
</dbReference>
<dbReference type="PANTHER" id="PTHR34469:SF4">
    <property type="entry name" value="PHOTOSYSTEM II REACTION CENTER PROTEIN H"/>
    <property type="match status" value="1"/>
</dbReference>
<dbReference type="Pfam" id="PF00737">
    <property type="entry name" value="PsbH"/>
    <property type="match status" value="1"/>
</dbReference>
<dbReference type="SUPFAM" id="SSF161025">
    <property type="entry name" value="Photosystem II 10 kDa phosphoprotein PsbH"/>
    <property type="match status" value="1"/>
</dbReference>
<name>PSBH_DRIGR</name>
<feature type="initiator methionine" description="Removed" evidence="1">
    <location>
        <position position="1"/>
    </location>
</feature>
<feature type="chain" id="PRO_0000275752" description="Photosystem II reaction center protein H">
    <location>
        <begin position="2"/>
        <end position="73"/>
    </location>
</feature>
<feature type="transmembrane region" description="Helical" evidence="2">
    <location>
        <begin position="41"/>
        <end position="61"/>
    </location>
</feature>
<feature type="region of interest" description="Disordered" evidence="3">
    <location>
        <begin position="1"/>
        <end position="21"/>
    </location>
</feature>
<feature type="modified residue" description="Phosphothreonine" evidence="2">
    <location>
        <position position="3"/>
    </location>
</feature>
<feature type="modified residue" description="Phosphothreonine" evidence="2">
    <location>
        <position position="5"/>
    </location>
</feature>
<protein>
    <recommendedName>
        <fullName evidence="2">Photosystem II reaction center protein H</fullName>
        <shortName evidence="2">PSII-H</shortName>
    </recommendedName>
    <alternativeName>
        <fullName evidence="2">Photosystem II 10 kDa phosphoprotein</fullName>
    </alternativeName>
</protein>
<keyword id="KW-0150">Chloroplast</keyword>
<keyword id="KW-0472">Membrane</keyword>
<keyword id="KW-0597">Phosphoprotein</keyword>
<keyword id="KW-0602">Photosynthesis</keyword>
<keyword id="KW-0604">Photosystem II</keyword>
<keyword id="KW-0934">Plastid</keyword>
<keyword id="KW-0793">Thylakoid</keyword>
<keyword id="KW-0812">Transmembrane</keyword>
<keyword id="KW-1133">Transmembrane helix</keyword>
<evidence type="ECO:0000250" key="1">
    <source>
        <dbReference type="UniProtKB" id="P56780"/>
    </source>
</evidence>
<evidence type="ECO:0000255" key="2">
    <source>
        <dbReference type="HAMAP-Rule" id="MF_00752"/>
    </source>
</evidence>
<evidence type="ECO:0000256" key="3">
    <source>
        <dbReference type="SAM" id="MobiDB-lite"/>
    </source>
</evidence>
<gene>
    <name evidence="2" type="primary">psbH</name>
</gene>
<comment type="function">
    <text evidence="2">One of the components of the core complex of photosystem II (PSII), required for its stability and/or assembly. PSII is a light-driven water:plastoquinone oxidoreductase that uses light energy to abstract electrons from H(2)O, generating O(2) and a proton gradient subsequently used for ATP formation. It consists of a core antenna complex that captures photons, and an electron transfer chain that converts photonic excitation into a charge separation.</text>
</comment>
<comment type="subunit">
    <text evidence="2">PSII is composed of 1 copy each of membrane proteins PsbA, PsbB, PsbC, PsbD, PsbE, PsbF, PsbH, PsbI, PsbJ, PsbK, PsbL, PsbM, PsbT, PsbX, PsbY, PsbZ, Psb30/Ycf12, at least 3 peripheral proteins of the oxygen-evolving complex and a large number of cofactors. It forms dimeric complexes.</text>
</comment>
<comment type="subcellular location">
    <subcellularLocation>
        <location evidence="2">Plastid</location>
        <location evidence="2">Chloroplast thylakoid membrane</location>
        <topology evidence="2">Single-pass membrane protein</topology>
    </subcellularLocation>
</comment>
<comment type="PTM">
    <text evidence="2">Phosphorylation is a light-dependent reaction catalyzed by a membrane-bound kinase; phosphorylation occurs on Thr residue(s) in the N-terminus of the protein.</text>
</comment>
<comment type="similarity">
    <text evidence="2">Belongs to the PsbH family.</text>
</comment>
<geneLocation type="chloroplast"/>